<protein>
    <recommendedName>
        <fullName evidence="1">Thymidine phosphorylase</fullName>
        <ecNumber evidence="1">2.4.2.4</ecNumber>
    </recommendedName>
    <alternativeName>
        <fullName evidence="1">TdRPase</fullName>
    </alternativeName>
</protein>
<name>TYPH_ECO7I</name>
<accession>B7NW62</accession>
<sequence>MFLAQEIIRKKRDGHALSDEEIRFFINGIRDNTISEGQIAALAMTIFFHDMTMPERVSLTMAMRDSGTVLDWKSLHLNGPIVDKHSTGGVGDVTSLMLGPMVAACGGYIPMISGRGLGHTGGTLDKLESIPGFDIFPDDNRFREIIKDVGVAIIGQTSSLAPADKRFYATRDITATVDSIPLITASILAKKLAEGLDALVMDVKVGSGAFMPTYELSEALAEAIVGVANGAGVRTTALLTDMNQVLASSAGNAVEVREAVQFLTGEYRNPRLFDVTMALCVEMLISGKLAKDDAEARAKLQAVLDNGKAAEVFGRMVAAQKGPTDFVENYAKYLPTAMLTKAVYADTEGFVSEMDTRALGMAVVAMGGGRRQASDTIDYSVGFTDMARLGDQVDGQRPLAVIHAKDENSWQEAAKAVKAAIKLADKAPESTPTVYRRISE</sequence>
<evidence type="ECO:0000255" key="1">
    <source>
        <dbReference type="HAMAP-Rule" id="MF_01628"/>
    </source>
</evidence>
<keyword id="KW-0328">Glycosyltransferase</keyword>
<keyword id="KW-0808">Transferase</keyword>
<feature type="chain" id="PRO_1000186253" description="Thymidine phosphorylase">
    <location>
        <begin position="1"/>
        <end position="440"/>
    </location>
</feature>
<organism>
    <name type="scientific">Escherichia coli O7:K1 (strain IAI39 / ExPEC)</name>
    <dbReference type="NCBI Taxonomy" id="585057"/>
    <lineage>
        <taxon>Bacteria</taxon>
        <taxon>Pseudomonadati</taxon>
        <taxon>Pseudomonadota</taxon>
        <taxon>Gammaproteobacteria</taxon>
        <taxon>Enterobacterales</taxon>
        <taxon>Enterobacteriaceae</taxon>
        <taxon>Escherichia</taxon>
    </lineage>
</organism>
<gene>
    <name evidence="1" type="primary">deoA</name>
    <name type="ordered locus">ECIAI39_4914</name>
</gene>
<dbReference type="EC" id="2.4.2.4" evidence="1"/>
<dbReference type="EMBL" id="CU928164">
    <property type="protein sequence ID" value="CAR21010.1"/>
    <property type="molecule type" value="Genomic_DNA"/>
</dbReference>
<dbReference type="RefSeq" id="WP_000477811.1">
    <property type="nucleotide sequence ID" value="NC_011750.1"/>
</dbReference>
<dbReference type="RefSeq" id="YP_002410759.1">
    <property type="nucleotide sequence ID" value="NC_011750.1"/>
</dbReference>
<dbReference type="SMR" id="B7NW62"/>
<dbReference type="STRING" id="585057.ECIAI39_4914"/>
<dbReference type="GeneID" id="93777462"/>
<dbReference type="KEGG" id="ect:ECIAI39_4914"/>
<dbReference type="PATRIC" id="fig|585057.6.peg.5076"/>
<dbReference type="HOGENOM" id="CLU_025040_0_1_6"/>
<dbReference type="UniPathway" id="UPA00578">
    <property type="reaction ID" value="UER00638"/>
</dbReference>
<dbReference type="Proteomes" id="UP000000749">
    <property type="component" value="Chromosome"/>
</dbReference>
<dbReference type="GO" id="GO:0005829">
    <property type="term" value="C:cytosol"/>
    <property type="evidence" value="ECO:0007669"/>
    <property type="project" value="TreeGrafter"/>
</dbReference>
<dbReference type="GO" id="GO:0004645">
    <property type="term" value="F:1,4-alpha-oligoglucan phosphorylase activity"/>
    <property type="evidence" value="ECO:0007669"/>
    <property type="project" value="InterPro"/>
</dbReference>
<dbReference type="GO" id="GO:0009032">
    <property type="term" value="F:thymidine phosphorylase activity"/>
    <property type="evidence" value="ECO:0007669"/>
    <property type="project" value="UniProtKB-UniRule"/>
</dbReference>
<dbReference type="GO" id="GO:0006206">
    <property type="term" value="P:pyrimidine nucleobase metabolic process"/>
    <property type="evidence" value="ECO:0007669"/>
    <property type="project" value="InterPro"/>
</dbReference>
<dbReference type="GO" id="GO:0046104">
    <property type="term" value="P:thymidine metabolic process"/>
    <property type="evidence" value="ECO:0007669"/>
    <property type="project" value="UniProtKB-UniRule"/>
</dbReference>
<dbReference type="FunFam" id="3.40.1030.10:FF:000001">
    <property type="entry name" value="Thymidine phosphorylase"/>
    <property type="match status" value="1"/>
</dbReference>
<dbReference type="FunFam" id="3.90.1170.30:FF:000001">
    <property type="entry name" value="Thymidine phosphorylase"/>
    <property type="match status" value="1"/>
</dbReference>
<dbReference type="Gene3D" id="3.40.1030.10">
    <property type="entry name" value="Nucleoside phosphorylase/phosphoribosyltransferase catalytic domain"/>
    <property type="match status" value="1"/>
</dbReference>
<dbReference type="Gene3D" id="3.90.1170.30">
    <property type="entry name" value="Pyrimidine nucleoside phosphorylase-like, C-terminal domain"/>
    <property type="match status" value="1"/>
</dbReference>
<dbReference type="Gene3D" id="1.20.970.10">
    <property type="entry name" value="Transferase, Pyrimidine Nucleoside Phosphorylase, Chain C"/>
    <property type="match status" value="1"/>
</dbReference>
<dbReference type="HAMAP" id="MF_01628">
    <property type="entry name" value="Thymid_phosp"/>
    <property type="match status" value="1"/>
</dbReference>
<dbReference type="InterPro" id="IPR000312">
    <property type="entry name" value="Glycosyl_Trfase_fam3"/>
</dbReference>
<dbReference type="InterPro" id="IPR017459">
    <property type="entry name" value="Glycosyl_Trfase_fam3_N_dom"/>
</dbReference>
<dbReference type="InterPro" id="IPR036320">
    <property type="entry name" value="Glycosyl_Trfase_fam3_N_dom_sf"/>
</dbReference>
<dbReference type="InterPro" id="IPR035902">
    <property type="entry name" value="Nuc_phospho_transferase"/>
</dbReference>
<dbReference type="InterPro" id="IPR036566">
    <property type="entry name" value="PYNP-like_C_sf"/>
</dbReference>
<dbReference type="InterPro" id="IPR013102">
    <property type="entry name" value="PYNP_C"/>
</dbReference>
<dbReference type="InterPro" id="IPR018090">
    <property type="entry name" value="Pyrmidine_PPas_bac/euk"/>
</dbReference>
<dbReference type="InterPro" id="IPR017872">
    <property type="entry name" value="Pyrmidine_PPase_CS"/>
</dbReference>
<dbReference type="InterPro" id="IPR000053">
    <property type="entry name" value="Thymidine/pyrmidine_PPase"/>
</dbReference>
<dbReference type="InterPro" id="IPR013465">
    <property type="entry name" value="Thymidine_Pase"/>
</dbReference>
<dbReference type="NCBIfam" id="NF004490">
    <property type="entry name" value="PRK05820.1"/>
    <property type="match status" value="1"/>
</dbReference>
<dbReference type="NCBIfam" id="TIGR02643">
    <property type="entry name" value="T_phosphoryl"/>
    <property type="match status" value="1"/>
</dbReference>
<dbReference type="NCBIfam" id="TIGR02644">
    <property type="entry name" value="Y_phosphoryl"/>
    <property type="match status" value="1"/>
</dbReference>
<dbReference type="PANTHER" id="PTHR10515">
    <property type="entry name" value="THYMIDINE PHOSPHORYLASE"/>
    <property type="match status" value="1"/>
</dbReference>
<dbReference type="PANTHER" id="PTHR10515:SF0">
    <property type="entry name" value="THYMIDINE PHOSPHORYLASE"/>
    <property type="match status" value="1"/>
</dbReference>
<dbReference type="Pfam" id="PF02885">
    <property type="entry name" value="Glycos_trans_3N"/>
    <property type="match status" value="1"/>
</dbReference>
<dbReference type="Pfam" id="PF00591">
    <property type="entry name" value="Glycos_transf_3"/>
    <property type="match status" value="1"/>
</dbReference>
<dbReference type="Pfam" id="PF07831">
    <property type="entry name" value="PYNP_C"/>
    <property type="match status" value="1"/>
</dbReference>
<dbReference type="PIRSF" id="PIRSF000478">
    <property type="entry name" value="TP_PyNP"/>
    <property type="match status" value="1"/>
</dbReference>
<dbReference type="SMART" id="SM00941">
    <property type="entry name" value="PYNP_C"/>
    <property type="match status" value="1"/>
</dbReference>
<dbReference type="SUPFAM" id="SSF52418">
    <property type="entry name" value="Nucleoside phosphorylase/phosphoribosyltransferase catalytic domain"/>
    <property type="match status" value="1"/>
</dbReference>
<dbReference type="SUPFAM" id="SSF47648">
    <property type="entry name" value="Nucleoside phosphorylase/phosphoribosyltransferase N-terminal domain"/>
    <property type="match status" value="1"/>
</dbReference>
<dbReference type="SUPFAM" id="SSF54680">
    <property type="entry name" value="Pyrimidine nucleoside phosphorylase C-terminal domain"/>
    <property type="match status" value="1"/>
</dbReference>
<dbReference type="PROSITE" id="PS00647">
    <property type="entry name" value="THYMID_PHOSPHORYLASE"/>
    <property type="match status" value="1"/>
</dbReference>
<proteinExistence type="inferred from homology"/>
<reference key="1">
    <citation type="journal article" date="2009" name="PLoS Genet.">
        <title>Organised genome dynamics in the Escherichia coli species results in highly diverse adaptive paths.</title>
        <authorList>
            <person name="Touchon M."/>
            <person name="Hoede C."/>
            <person name="Tenaillon O."/>
            <person name="Barbe V."/>
            <person name="Baeriswyl S."/>
            <person name="Bidet P."/>
            <person name="Bingen E."/>
            <person name="Bonacorsi S."/>
            <person name="Bouchier C."/>
            <person name="Bouvet O."/>
            <person name="Calteau A."/>
            <person name="Chiapello H."/>
            <person name="Clermont O."/>
            <person name="Cruveiller S."/>
            <person name="Danchin A."/>
            <person name="Diard M."/>
            <person name="Dossat C."/>
            <person name="Karoui M.E."/>
            <person name="Frapy E."/>
            <person name="Garry L."/>
            <person name="Ghigo J.M."/>
            <person name="Gilles A.M."/>
            <person name="Johnson J."/>
            <person name="Le Bouguenec C."/>
            <person name="Lescat M."/>
            <person name="Mangenot S."/>
            <person name="Martinez-Jehanne V."/>
            <person name="Matic I."/>
            <person name="Nassif X."/>
            <person name="Oztas S."/>
            <person name="Petit M.A."/>
            <person name="Pichon C."/>
            <person name="Rouy Z."/>
            <person name="Ruf C.S."/>
            <person name="Schneider D."/>
            <person name="Tourret J."/>
            <person name="Vacherie B."/>
            <person name="Vallenet D."/>
            <person name="Medigue C."/>
            <person name="Rocha E.P.C."/>
            <person name="Denamur E."/>
        </authorList>
    </citation>
    <scope>NUCLEOTIDE SEQUENCE [LARGE SCALE GENOMIC DNA]</scope>
    <source>
        <strain>IAI39 / ExPEC</strain>
    </source>
</reference>
<comment type="function">
    <text evidence="1">The enzymes which catalyze the reversible phosphorolysis of pyrimidine nucleosides are involved in the degradation of these compounds and in their utilization as carbon and energy sources, or in the rescue of pyrimidine bases for nucleotide synthesis.</text>
</comment>
<comment type="catalytic activity">
    <reaction evidence="1">
        <text>thymidine + phosphate = 2-deoxy-alpha-D-ribose 1-phosphate + thymine</text>
        <dbReference type="Rhea" id="RHEA:16037"/>
        <dbReference type="ChEBI" id="CHEBI:17748"/>
        <dbReference type="ChEBI" id="CHEBI:17821"/>
        <dbReference type="ChEBI" id="CHEBI:43474"/>
        <dbReference type="ChEBI" id="CHEBI:57259"/>
        <dbReference type="EC" id="2.4.2.4"/>
    </reaction>
</comment>
<comment type="pathway">
    <text evidence="1">Pyrimidine metabolism; dTMP biosynthesis via salvage pathway; dTMP from thymine: step 1/2.</text>
</comment>
<comment type="subunit">
    <text evidence="1">Homodimer.</text>
</comment>
<comment type="similarity">
    <text evidence="1">Belongs to the thymidine/pyrimidine-nucleoside phosphorylase family.</text>
</comment>